<feature type="chain" id="PRO_0000438890" description="Sca1 complex scaffold protein scaA">
    <location>
        <begin position="1"/>
        <end position="1582"/>
    </location>
</feature>
<feature type="repeat" description="TPR 1" evidence="1">
    <location>
        <begin position="4"/>
        <end position="37"/>
    </location>
</feature>
<feature type="repeat" description="TPR 2" evidence="1">
    <location>
        <begin position="166"/>
        <end position="199"/>
    </location>
</feature>
<feature type="repeat" description="TPR 3" evidence="1">
    <location>
        <begin position="742"/>
        <end position="777"/>
    </location>
</feature>
<feature type="repeat" description="TPR 4" evidence="1">
    <location>
        <begin position="1080"/>
        <end position="1113"/>
    </location>
</feature>
<feature type="region of interest" description="Disordered" evidence="2">
    <location>
        <begin position="1"/>
        <end position="22"/>
    </location>
</feature>
<feature type="region of interest" description="Disordered" evidence="2">
    <location>
        <begin position="108"/>
        <end position="147"/>
    </location>
</feature>
<feature type="region of interest" description="Disordered" evidence="2">
    <location>
        <begin position="246"/>
        <end position="349"/>
    </location>
</feature>
<feature type="region of interest" description="GefA and gefH binding" evidence="3">
    <location>
        <begin position="400"/>
        <end position="600"/>
    </location>
</feature>
<feature type="region of interest" description="Disordered" evidence="2">
    <location>
        <begin position="468"/>
        <end position="493"/>
    </location>
</feature>
<feature type="region of interest" description="Disordered" evidence="2">
    <location>
        <begin position="686"/>
        <end position="734"/>
    </location>
</feature>
<feature type="region of interest" description="Disordered" evidence="2">
    <location>
        <begin position="864"/>
        <end position="978"/>
    </location>
</feature>
<feature type="region of interest" description="PppA and pho2B binding" evidence="3">
    <location>
        <begin position="1000"/>
        <end position="1400"/>
    </location>
</feature>
<feature type="compositionally biased region" description="Low complexity" evidence="2">
    <location>
        <begin position="1"/>
        <end position="14"/>
    </location>
</feature>
<feature type="compositionally biased region" description="Low complexity" evidence="2">
    <location>
        <begin position="109"/>
        <end position="131"/>
    </location>
</feature>
<feature type="compositionally biased region" description="Polar residues" evidence="2">
    <location>
        <begin position="249"/>
        <end position="267"/>
    </location>
</feature>
<feature type="compositionally biased region" description="Polar residues" evidence="2">
    <location>
        <begin position="288"/>
        <end position="310"/>
    </location>
</feature>
<feature type="compositionally biased region" description="Polar residues" evidence="2">
    <location>
        <begin position="318"/>
        <end position="332"/>
    </location>
</feature>
<feature type="compositionally biased region" description="Gly residues" evidence="2">
    <location>
        <begin position="478"/>
        <end position="493"/>
    </location>
</feature>
<feature type="compositionally biased region" description="Gly residues" evidence="2">
    <location>
        <begin position="694"/>
        <end position="714"/>
    </location>
</feature>
<feature type="compositionally biased region" description="Low complexity" evidence="2">
    <location>
        <begin position="715"/>
        <end position="726"/>
    </location>
</feature>
<feature type="compositionally biased region" description="Gly residues" evidence="2">
    <location>
        <begin position="864"/>
        <end position="875"/>
    </location>
</feature>
<feature type="compositionally biased region" description="Low complexity" evidence="2">
    <location>
        <begin position="903"/>
        <end position="928"/>
    </location>
</feature>
<feature type="compositionally biased region" description="Polar residues" evidence="2">
    <location>
        <begin position="940"/>
        <end position="953"/>
    </location>
</feature>
<feature type="compositionally biased region" description="Low complexity" evidence="2">
    <location>
        <begin position="960"/>
        <end position="972"/>
    </location>
</feature>
<feature type="modified residue" description="Phosphoserine; by PKB" evidence="3">
    <location>
        <position position="359"/>
    </location>
</feature>
<gene>
    <name evidence="4" type="primary">scaA</name>
    <name type="synonym">D1105</name>
    <name type="synonym">sca1</name>
    <name type="ORF">DDB0220018</name>
    <name type="ORF">DDB_G0277843</name>
</gene>
<proteinExistence type="evidence at protein level"/>
<keyword id="KW-1003">Cell membrane</keyword>
<keyword id="KW-0472">Membrane</keyword>
<keyword id="KW-0597">Phosphoprotein</keyword>
<keyword id="KW-1185">Reference proteome</keyword>
<keyword id="KW-0677">Repeat</keyword>
<keyword id="KW-0802">TPR repeat</keyword>
<comment type="function">
    <text evidence="3">Component of the Sca1 complex, a regulator of cell motility, chemotaxis and signal relay (PubMed:20493808). The Sca1 complex is recruited to the plasma membrane in a chemoattractant- and F-actin-dependent manner and is enriched at the leading edge of chemotaxing cells where it regulates F-actin dynamics and signal relay by controlling the activation of rasC and the downstream target of rapamycin complex 2 (TORC2)-Akt/protein kinase B (PKB) pathway (PubMed:20493808). ScaA acts as a molecular scaffold, bringing together gefA, gefH and phr with PP2A (PubMed:20493808).</text>
</comment>
<comment type="subunit">
    <text evidence="3">Component of the Sca1 complex composed of at least gefA, gefH, scaA, phr, and the protein phosphatase 2A subunits pppA and pho2B (PubMed:20493808).</text>
</comment>
<comment type="subcellular location">
    <subcellularLocation>
        <location evidence="3">Cell membrane</location>
    </subcellularLocation>
    <text evidence="3">The Sca1 complex is recruited to the plasma membrane in a chemoattractant- and F-actin-dependent manner and is enriched at the leading edge of chemotaxing cells (PubMed:20493808). Membrane localization of the Sca1 complex is regulated by scaA phosphorylation by PKB and PKB-related PKBR1 (PubMed:20493808).</text>
</comment>
<comment type="PTM">
    <text evidence="3">Phosphorylated at Ser-359 by PKB and PKBR1 is induced by chemoattractant (PubMed:20493808).</text>
</comment>
<comment type="disruption phenotype">
    <text evidence="3">Display directionality defects during chemotaxis as well as defects in random motility (PubMed:20493808).</text>
</comment>
<sequence>MSSLDPSLSTTPSTNRRGTFSKAKSFRRAALNLEPQGTPGQPHAFRFLSGEEYSGPDIIENIKKPININIESEEYKTPLFLGANGTLYNKYYIPIKIIGIDEPLPQTGLSPSLSSSSSSSSSPSPPTTTSTTPPPPNNNNNSKQIKKNNSISDLTPYLNFNSTDQIYTSFPESMAFDDYMDYEESLVEWKRQVEQNLGIIQLPHSIGRTYPRPKVIHEQLFRKNSEASNDDSISYDIERKLTDSDIKETNSSVNDDGESFSHSPTLRGNNGSSLSVGGGGDNHDNTSNKDNASSQGTNHGVTLNHPNSGINLRERSNSDTSTGSFEGTQLDGSSPMDGSPSTGSLAGFVANGTRSRTNSITYFDQRNQRSNSLSPKHSMLQSRLADSQSLDSSMYGKMGRSGSGFGMDHESWFLQKDPWDSQLILTEPHPDLFSTYEEYEYAMKNWAHEVITKTSILPPHPGQFIQLPKNSELSTDDGSGGGSGGSGVDGVGGNHQLGGSARHMLEMDFEMAKNQSNWTLRPIIRPIITEETMIFNRILSQSNLKHTEYDHLFSIDQELPPSQVWKTLDSDEKLKITETIDRWYRKKLTIQRQTSTWFRGGLWANHFLMPNIQSGWRESVSKKSSILPPLSLKALRRLDINSEADGKRVEHSFPIPELPINFNKLLAPDMNLQYFLGMLEMPTAHSLSSATGGQQQGGSGGGSGGSGSGSGSGSGLNMSGTSGSSGKSEKDKDKETANYIAMHSINNTTNVGTKEDRRQYTKILQTYEQRLQFSFRLDALNSWSEGGYTPMELQEKKLDIEQLVAAPGFDLQNGVWSLVNNSAHFLDKFQETFDQVDLRLYAPAIPMLPAIVPSVFINAGGGSGGGSGGASGGGISTSSGTSPNIVRPGSSSIGGGQPPSSPHIPSGSSLLSSPPNRQGSTGSFSFIGSPGGGGKISPTNSSSLESPRTQSQLAAVVERGSSPRSHSGGSISTHPNTPSVSSNTFLSLINTDSFPELLKFLDLTNEKLALGKISSLVLLVLTSELKGTMVIENILFSKDLQSLYRLARAISFFDAVPLDLFTYPTHLNEMLTPSIFKGSTQEVVRLVFVYYYLGIIQERLNFFSNNVGILGFVNSSRKDAAERIGIQFQNDREFLYKIFKALGRKSILVSNCFLFVLIQLIKMSESPTVQSLLKGELLTHIRDLSASKFSHSRFAAKRLYQILQEDPWKEFLMASYAESIKKNESQHLTDLTTMKEGPKLAIPSISLISELTFNFCVGVLENINSTPIPKPIYKFILNDSIFFQLCNAIVKCKNFTQSTQIVSKVFASLCKVLAKFNLFKNSDSIKSGGKVDPKKQNDVETGVAISPTLLFEIIGFLQNSSLDNNRYCSIIKTNMLIALRQLLKQSEIFDSIKKEGNLYNKFLIPACRDGKNVEFNRNVWRLFFQMIRFHHGHIEYLEKSKYLNALMDIISLNAGNVVLTNALHYLSKLFSLVSYETRKNALRAPGTLSIDTKYSEKDVKSLLNFFVERSCFIKFHMIYKKLTENTEGIQIDQRLLINITTFYRIISFLPSCQKLLKDTLKNPEYKTGIIQVSKMYKPSETF</sequence>
<evidence type="ECO:0000255" key="1"/>
<evidence type="ECO:0000256" key="2">
    <source>
        <dbReference type="SAM" id="MobiDB-lite"/>
    </source>
</evidence>
<evidence type="ECO:0000269" key="3">
    <source>
    </source>
</evidence>
<evidence type="ECO:0000303" key="4">
    <source>
    </source>
</evidence>
<reference key="1">
    <citation type="journal article" date="2005" name="Nature">
        <title>The genome of the social amoeba Dictyostelium discoideum.</title>
        <authorList>
            <person name="Eichinger L."/>
            <person name="Pachebat J.A."/>
            <person name="Gloeckner G."/>
            <person name="Rajandream M.A."/>
            <person name="Sucgang R."/>
            <person name="Berriman M."/>
            <person name="Song J."/>
            <person name="Olsen R."/>
            <person name="Szafranski K."/>
            <person name="Xu Q."/>
            <person name="Tunggal B."/>
            <person name="Kummerfeld S."/>
            <person name="Madera M."/>
            <person name="Konfortov B.A."/>
            <person name="Rivero F."/>
            <person name="Bankier A.T."/>
            <person name="Lehmann R."/>
            <person name="Hamlin N."/>
            <person name="Davies R."/>
            <person name="Gaudet P."/>
            <person name="Fey P."/>
            <person name="Pilcher K."/>
            <person name="Chen G."/>
            <person name="Saunders D."/>
            <person name="Sodergren E.J."/>
            <person name="Davis P."/>
            <person name="Kerhornou A."/>
            <person name="Nie X."/>
            <person name="Hall N."/>
            <person name="Anjard C."/>
            <person name="Hemphill L."/>
            <person name="Bason N."/>
            <person name="Farbrother P."/>
            <person name="Desany B."/>
            <person name="Just E."/>
            <person name="Morio T."/>
            <person name="Rost R."/>
            <person name="Churcher C.M."/>
            <person name="Cooper J."/>
            <person name="Haydock S."/>
            <person name="van Driessche N."/>
            <person name="Cronin A."/>
            <person name="Goodhead I."/>
            <person name="Muzny D.M."/>
            <person name="Mourier T."/>
            <person name="Pain A."/>
            <person name="Lu M."/>
            <person name="Harper D."/>
            <person name="Lindsay R."/>
            <person name="Hauser H."/>
            <person name="James K.D."/>
            <person name="Quiles M."/>
            <person name="Madan Babu M."/>
            <person name="Saito T."/>
            <person name="Buchrieser C."/>
            <person name="Wardroper A."/>
            <person name="Felder M."/>
            <person name="Thangavelu M."/>
            <person name="Johnson D."/>
            <person name="Knights A."/>
            <person name="Loulseged H."/>
            <person name="Mungall K.L."/>
            <person name="Oliver K."/>
            <person name="Price C."/>
            <person name="Quail M.A."/>
            <person name="Urushihara H."/>
            <person name="Hernandez J."/>
            <person name="Rabbinowitsch E."/>
            <person name="Steffen D."/>
            <person name="Sanders M."/>
            <person name="Ma J."/>
            <person name="Kohara Y."/>
            <person name="Sharp S."/>
            <person name="Simmonds M.N."/>
            <person name="Spiegler S."/>
            <person name="Tivey A."/>
            <person name="Sugano S."/>
            <person name="White B."/>
            <person name="Walker D."/>
            <person name="Woodward J.R."/>
            <person name="Winckler T."/>
            <person name="Tanaka Y."/>
            <person name="Shaulsky G."/>
            <person name="Schleicher M."/>
            <person name="Weinstock G.M."/>
            <person name="Rosenthal A."/>
            <person name="Cox E.C."/>
            <person name="Chisholm R.L."/>
            <person name="Gibbs R.A."/>
            <person name="Loomis W.F."/>
            <person name="Platzer M."/>
            <person name="Kay R.R."/>
            <person name="Williams J.G."/>
            <person name="Dear P.H."/>
            <person name="Noegel A.A."/>
            <person name="Barrell B.G."/>
            <person name="Kuspa A."/>
        </authorList>
    </citation>
    <scope>NUCLEOTIDE SEQUENCE [LARGE SCALE GENOMIC DNA]</scope>
    <source>
        <strain>AX4</strain>
    </source>
</reference>
<reference key="2">
    <citation type="journal article" date="2010" name="Dev. Cell">
        <title>A Ras signaling complex controls the RasC-TORC2 pathway and directed cell migration.</title>
        <authorList>
            <person name="Charest P.G."/>
            <person name="Shen Z."/>
            <person name="Lakoduk A."/>
            <person name="Sasaki A.T."/>
            <person name="Briggs S.P."/>
            <person name="Firtel R.A."/>
        </authorList>
    </citation>
    <scope>IDENTIFICATION IN THE SCA1 COMPLEX</scope>
    <scope>FUNCTION</scope>
    <scope>DISRUPTION PHENOTYPE</scope>
    <scope>DOMAIN</scope>
    <scope>PHOSPHORYLATION AT SER-359</scope>
</reference>
<organism>
    <name type="scientific">Dictyostelium discoideum</name>
    <name type="common">Social amoeba</name>
    <dbReference type="NCBI Taxonomy" id="44689"/>
    <lineage>
        <taxon>Eukaryota</taxon>
        <taxon>Amoebozoa</taxon>
        <taxon>Evosea</taxon>
        <taxon>Eumycetozoa</taxon>
        <taxon>Dictyostelia</taxon>
        <taxon>Dictyosteliales</taxon>
        <taxon>Dictyosteliaceae</taxon>
        <taxon>Dictyostelium</taxon>
    </lineage>
</organism>
<dbReference type="EMBL" id="AAFI02000023">
    <property type="protein sequence ID" value="EAL68094.1"/>
    <property type="molecule type" value="Genomic_DNA"/>
</dbReference>
<dbReference type="FunCoup" id="Q54XY4">
    <property type="interactions" value="7"/>
</dbReference>
<dbReference type="STRING" id="44689.Q54XY4"/>
<dbReference type="GlyGen" id="Q54XY4">
    <property type="glycosylation" value="1 site"/>
</dbReference>
<dbReference type="iPTMnet" id="Q54XY4"/>
<dbReference type="PaxDb" id="44689-DDB0220018"/>
<dbReference type="KEGG" id="ddi:DDB_G0277843"/>
<dbReference type="dictyBase" id="DDB_G0277843">
    <property type="gene designation" value="scaA"/>
</dbReference>
<dbReference type="VEuPathDB" id="AmoebaDB:DDB_G0277843"/>
<dbReference type="eggNOG" id="ENOG502R6N6">
    <property type="taxonomic scope" value="Eukaryota"/>
</dbReference>
<dbReference type="HOGENOM" id="CLU_245066_0_0_1"/>
<dbReference type="InParanoid" id="Q54XY4"/>
<dbReference type="OMA" id="YEFAMRN"/>
<dbReference type="PRO" id="PR:Q54XY4"/>
<dbReference type="Proteomes" id="UP000002195">
    <property type="component" value="Chromosome 3"/>
</dbReference>
<dbReference type="GO" id="GO:0031252">
    <property type="term" value="C:cell leading edge"/>
    <property type="evidence" value="ECO:0000315"/>
    <property type="project" value="dictyBase"/>
</dbReference>
<dbReference type="GO" id="GO:0005829">
    <property type="term" value="C:cytosol"/>
    <property type="evidence" value="ECO:0000314"/>
    <property type="project" value="dictyBase"/>
</dbReference>
<dbReference type="GO" id="GO:0005886">
    <property type="term" value="C:plasma membrane"/>
    <property type="evidence" value="ECO:0000314"/>
    <property type="project" value="dictyBase"/>
</dbReference>
<dbReference type="GO" id="GO:1905742">
    <property type="term" value="C:Ras guanyl-nucleotide exchange factor complex"/>
    <property type="evidence" value="ECO:0000314"/>
    <property type="project" value="dictyBase"/>
</dbReference>
<dbReference type="GO" id="GO:0030295">
    <property type="term" value="F:protein kinase activator activity"/>
    <property type="evidence" value="ECO:0000314"/>
    <property type="project" value="dictyBase"/>
</dbReference>
<dbReference type="GO" id="GO:0031152">
    <property type="term" value="P:aggregation involved in sorocarp development"/>
    <property type="evidence" value="ECO:0000315"/>
    <property type="project" value="dictyBase"/>
</dbReference>
<dbReference type="GO" id="GO:0043327">
    <property type="term" value="P:chemotaxis to cAMP"/>
    <property type="evidence" value="ECO:0000315"/>
    <property type="project" value="dictyBase"/>
</dbReference>
<dbReference type="GO" id="GO:0046579">
    <property type="term" value="P:positive regulation of Ras protein signal transduction"/>
    <property type="evidence" value="ECO:0000315"/>
    <property type="project" value="dictyBase"/>
</dbReference>
<dbReference type="GO" id="GO:1904515">
    <property type="term" value="P:positive regulation of TORC2 signaling"/>
    <property type="evidence" value="ECO:0000315"/>
    <property type="project" value="dictyBase"/>
</dbReference>
<dbReference type="GO" id="GO:0030587">
    <property type="term" value="P:sorocarp development"/>
    <property type="evidence" value="ECO:0007001"/>
    <property type="project" value="dictyBase"/>
</dbReference>
<dbReference type="InterPro" id="IPR037474">
    <property type="entry name" value="ScaA"/>
</dbReference>
<dbReference type="PANTHER" id="PTHR37516">
    <property type="entry name" value="SCA1 COMPLEX SCAFFOLD PROTEIN SCAA"/>
    <property type="match status" value="1"/>
</dbReference>
<dbReference type="PANTHER" id="PTHR37516:SF1">
    <property type="entry name" value="SCA1 COMPLEX SCAFFOLD PROTEIN SCAA"/>
    <property type="match status" value="1"/>
</dbReference>
<protein>
    <recommendedName>
        <fullName evidence="4">Sca1 complex scaffold protein scaA</fullName>
    </recommendedName>
</protein>
<accession>Q54XY4</accession>
<name>SCAA_DICDI</name>